<accession>Q8DC96</accession>
<protein>
    <recommendedName>
        <fullName evidence="1">HTH-type transcriptional regulator ArgP</fullName>
    </recommendedName>
</protein>
<name>ARGP_VIBVU</name>
<proteinExistence type="inferred from homology"/>
<reference key="1">
    <citation type="submission" date="2002-12" db="EMBL/GenBank/DDBJ databases">
        <title>Complete genome sequence of Vibrio vulnificus CMCP6.</title>
        <authorList>
            <person name="Rhee J.H."/>
            <person name="Kim S.Y."/>
            <person name="Chung S.S."/>
            <person name="Kim J.J."/>
            <person name="Moon Y.H."/>
            <person name="Jeong H."/>
            <person name="Choy H.E."/>
        </authorList>
    </citation>
    <scope>NUCLEOTIDE SEQUENCE [LARGE SCALE GENOMIC DNA]</scope>
    <source>
        <strain>CMCP6</strain>
    </source>
</reference>
<gene>
    <name evidence="1" type="primary">argP</name>
    <name type="synonym">iciA</name>
    <name type="ordered locus">VV1_1544</name>
</gene>
<keyword id="KW-0238">DNA-binding</keyword>
<keyword id="KW-0804">Transcription</keyword>
<keyword id="KW-0805">Transcription regulation</keyword>
<dbReference type="EMBL" id="AE016795">
    <property type="protein sequence ID" value="AAO09969.1"/>
    <property type="molecule type" value="Genomic_DNA"/>
</dbReference>
<dbReference type="RefSeq" id="WP_011079480.1">
    <property type="nucleotide sequence ID" value="NC_004459.3"/>
</dbReference>
<dbReference type="SMR" id="Q8DC96"/>
<dbReference type="KEGG" id="vvu:VV1_1544"/>
<dbReference type="HOGENOM" id="CLU_063829_0_0_6"/>
<dbReference type="Proteomes" id="UP000002275">
    <property type="component" value="Chromosome 1"/>
</dbReference>
<dbReference type="GO" id="GO:0003677">
    <property type="term" value="F:DNA binding"/>
    <property type="evidence" value="ECO:0007669"/>
    <property type="project" value="UniProtKB-UniRule"/>
</dbReference>
<dbReference type="GO" id="GO:0003700">
    <property type="term" value="F:DNA-binding transcription factor activity"/>
    <property type="evidence" value="ECO:0007669"/>
    <property type="project" value="UniProtKB-UniRule"/>
</dbReference>
<dbReference type="CDD" id="cd08428">
    <property type="entry name" value="PBP2_IciA_ArgP"/>
    <property type="match status" value="1"/>
</dbReference>
<dbReference type="FunFam" id="1.10.10.10:FF:000061">
    <property type="entry name" value="HTH-type transcriptional regulator ArgP"/>
    <property type="match status" value="1"/>
</dbReference>
<dbReference type="Gene3D" id="3.40.190.290">
    <property type="match status" value="1"/>
</dbReference>
<dbReference type="Gene3D" id="1.10.10.10">
    <property type="entry name" value="Winged helix-like DNA-binding domain superfamily/Winged helix DNA-binding domain"/>
    <property type="match status" value="1"/>
</dbReference>
<dbReference type="HAMAP" id="MF_00513">
    <property type="entry name" value="HTH_type_ArgP"/>
    <property type="match status" value="1"/>
</dbReference>
<dbReference type="InterPro" id="IPR017685">
    <property type="entry name" value="ArgP"/>
</dbReference>
<dbReference type="InterPro" id="IPR023490">
    <property type="entry name" value="ArgP_gammaproteobact"/>
</dbReference>
<dbReference type="InterPro" id="IPR050176">
    <property type="entry name" value="LTTR"/>
</dbReference>
<dbReference type="InterPro" id="IPR005119">
    <property type="entry name" value="LysR_subst-bd"/>
</dbReference>
<dbReference type="InterPro" id="IPR000847">
    <property type="entry name" value="Tscrpt_reg_HTH_LysR"/>
</dbReference>
<dbReference type="InterPro" id="IPR036388">
    <property type="entry name" value="WH-like_DNA-bd_sf"/>
</dbReference>
<dbReference type="InterPro" id="IPR036390">
    <property type="entry name" value="WH_DNA-bd_sf"/>
</dbReference>
<dbReference type="NCBIfam" id="TIGR03298">
    <property type="entry name" value="argP"/>
    <property type="match status" value="1"/>
</dbReference>
<dbReference type="NCBIfam" id="NF002964">
    <property type="entry name" value="PRK03635.1"/>
    <property type="match status" value="1"/>
</dbReference>
<dbReference type="NCBIfam" id="NF009888">
    <property type="entry name" value="PRK13348.1"/>
    <property type="match status" value="1"/>
</dbReference>
<dbReference type="PANTHER" id="PTHR30579:SF2">
    <property type="entry name" value="HTH-TYPE TRANSCRIPTIONAL REGULATOR ARGP"/>
    <property type="match status" value="1"/>
</dbReference>
<dbReference type="PANTHER" id="PTHR30579">
    <property type="entry name" value="TRANSCRIPTIONAL REGULATOR"/>
    <property type="match status" value="1"/>
</dbReference>
<dbReference type="Pfam" id="PF00126">
    <property type="entry name" value="HTH_1"/>
    <property type="match status" value="1"/>
</dbReference>
<dbReference type="Pfam" id="PF03466">
    <property type="entry name" value="LysR_substrate"/>
    <property type="match status" value="1"/>
</dbReference>
<dbReference type="PRINTS" id="PR00039">
    <property type="entry name" value="HTHLYSR"/>
</dbReference>
<dbReference type="SUPFAM" id="SSF53850">
    <property type="entry name" value="Periplasmic binding protein-like II"/>
    <property type="match status" value="1"/>
</dbReference>
<dbReference type="SUPFAM" id="SSF46785">
    <property type="entry name" value="Winged helix' DNA-binding domain"/>
    <property type="match status" value="1"/>
</dbReference>
<dbReference type="PROSITE" id="PS50931">
    <property type="entry name" value="HTH_LYSR"/>
    <property type="match status" value="1"/>
</dbReference>
<organism>
    <name type="scientific">Vibrio vulnificus (strain CMCP6)</name>
    <dbReference type="NCBI Taxonomy" id="216895"/>
    <lineage>
        <taxon>Bacteria</taxon>
        <taxon>Pseudomonadati</taxon>
        <taxon>Pseudomonadota</taxon>
        <taxon>Gammaproteobacteria</taxon>
        <taxon>Vibrionales</taxon>
        <taxon>Vibrionaceae</taxon>
        <taxon>Vibrio</taxon>
    </lineage>
</organism>
<sequence>MRGLDYKWIEALDAVVAQGGFERAAEELYISQSAVSQRIKQLERFLAQPVLIREQPPKPTPVGKKLLGLYRRVRILEHELIPELMNDDTAKPIQLALATNADSLATWLLPALKEVMTLRQVELNLAIYGESRSIEKLKSGEVAGAISLESQPIAGCKADYLGRMDYVCVASPDFYQRYFAAGVNYQTLRKAPAVSYDQYDDLHNRFLHDHFNISRDSIINHNVGSSEAFVRLAVSGIAYCLIPKLQIEQELASGVLMDITPGFLLSYRIYWHHWQLESGVLKEISQAIVQYAQAHLPQ</sequence>
<feature type="chain" id="PRO_0000105651" description="HTH-type transcriptional regulator ArgP">
    <location>
        <begin position="1"/>
        <end position="298"/>
    </location>
</feature>
<feature type="domain" description="HTH lysR-type" evidence="1">
    <location>
        <begin position="4"/>
        <end position="60"/>
    </location>
</feature>
<feature type="DNA-binding region" description="H-T-H motif" evidence="1">
    <location>
        <begin position="21"/>
        <end position="40"/>
    </location>
</feature>
<evidence type="ECO:0000255" key="1">
    <source>
        <dbReference type="HAMAP-Rule" id="MF_00513"/>
    </source>
</evidence>
<evidence type="ECO:0000305" key="2"/>
<comment type="function">
    <text evidence="1">Controls the transcription of genes involved in arginine and lysine metabolism.</text>
</comment>
<comment type="subunit">
    <text evidence="1">Homodimer.</text>
</comment>
<comment type="similarity">
    <text evidence="2">Belongs to the LysR transcriptional regulatory family.</text>
</comment>